<accession>B8FER0</accession>
<proteinExistence type="inferred from homology"/>
<sequence length="208" mass="24143">MARYRGSVCRICRRENLKLFLKGDRCYSDKCAFDRRSYPPGQHGQRRTKISDYGIQLREKQKIKRMYGLTEKQFHLTFKKADHAKGITGTNLLVNLERRLDNVIYRLGFADCRTQARQMVRHNHFTVNGHKVNIPSAQVSIGDTIEVREKSRTVAVITNAMEAVARRGLPQWLELDKANFKGVVNAYPVREDLTMPMQEQLIVELYSK</sequence>
<gene>
    <name evidence="1" type="primary">rpsD</name>
    <name type="ordered locus">Dalk_1890</name>
</gene>
<feature type="chain" id="PRO_1000140718" description="Small ribosomal subunit protein uS4">
    <location>
        <begin position="1"/>
        <end position="208"/>
    </location>
</feature>
<feature type="domain" description="S4 RNA-binding" evidence="1">
    <location>
        <begin position="98"/>
        <end position="159"/>
    </location>
</feature>
<protein>
    <recommendedName>
        <fullName evidence="1">Small ribosomal subunit protein uS4</fullName>
    </recommendedName>
    <alternativeName>
        <fullName evidence="2">30S ribosomal protein S4</fullName>
    </alternativeName>
</protein>
<comment type="function">
    <text evidence="1">One of the primary rRNA binding proteins, it binds directly to 16S rRNA where it nucleates assembly of the body of the 30S subunit.</text>
</comment>
<comment type="function">
    <text evidence="1">With S5 and S12 plays an important role in translational accuracy.</text>
</comment>
<comment type="subunit">
    <text evidence="1">Part of the 30S ribosomal subunit. Contacts protein S5. The interaction surface between S4 and S5 is involved in control of translational fidelity.</text>
</comment>
<comment type="similarity">
    <text evidence="1">Belongs to the universal ribosomal protein uS4 family.</text>
</comment>
<keyword id="KW-1185">Reference proteome</keyword>
<keyword id="KW-0687">Ribonucleoprotein</keyword>
<keyword id="KW-0689">Ribosomal protein</keyword>
<keyword id="KW-0694">RNA-binding</keyword>
<keyword id="KW-0699">rRNA-binding</keyword>
<reference key="1">
    <citation type="journal article" date="2012" name="Environ. Microbiol.">
        <title>The genome sequence of Desulfatibacillum alkenivorans AK-01: a blueprint for anaerobic alkane oxidation.</title>
        <authorList>
            <person name="Callaghan A.V."/>
            <person name="Morris B.E."/>
            <person name="Pereira I.A."/>
            <person name="McInerney M.J."/>
            <person name="Austin R.N."/>
            <person name="Groves J.T."/>
            <person name="Kukor J.J."/>
            <person name="Suflita J.M."/>
            <person name="Young L.Y."/>
            <person name="Zylstra G.J."/>
            <person name="Wawrik B."/>
        </authorList>
    </citation>
    <scope>NUCLEOTIDE SEQUENCE [LARGE SCALE GENOMIC DNA]</scope>
    <source>
        <strain>AK-01</strain>
    </source>
</reference>
<name>RS4_DESAL</name>
<dbReference type="EMBL" id="CP001322">
    <property type="protein sequence ID" value="ACL03587.1"/>
    <property type="molecule type" value="Genomic_DNA"/>
</dbReference>
<dbReference type="RefSeq" id="WP_012611018.1">
    <property type="nucleotide sequence ID" value="NC_011768.1"/>
</dbReference>
<dbReference type="SMR" id="B8FER0"/>
<dbReference type="KEGG" id="dal:Dalk_1890"/>
<dbReference type="eggNOG" id="COG0522">
    <property type="taxonomic scope" value="Bacteria"/>
</dbReference>
<dbReference type="HOGENOM" id="CLU_092403_0_2_7"/>
<dbReference type="Proteomes" id="UP000000739">
    <property type="component" value="Chromosome"/>
</dbReference>
<dbReference type="GO" id="GO:0015935">
    <property type="term" value="C:small ribosomal subunit"/>
    <property type="evidence" value="ECO:0007669"/>
    <property type="project" value="InterPro"/>
</dbReference>
<dbReference type="GO" id="GO:0019843">
    <property type="term" value="F:rRNA binding"/>
    <property type="evidence" value="ECO:0007669"/>
    <property type="project" value="UniProtKB-UniRule"/>
</dbReference>
<dbReference type="GO" id="GO:0003735">
    <property type="term" value="F:structural constituent of ribosome"/>
    <property type="evidence" value="ECO:0007669"/>
    <property type="project" value="InterPro"/>
</dbReference>
<dbReference type="GO" id="GO:0042274">
    <property type="term" value="P:ribosomal small subunit biogenesis"/>
    <property type="evidence" value="ECO:0007669"/>
    <property type="project" value="TreeGrafter"/>
</dbReference>
<dbReference type="GO" id="GO:0006412">
    <property type="term" value="P:translation"/>
    <property type="evidence" value="ECO:0007669"/>
    <property type="project" value="UniProtKB-UniRule"/>
</dbReference>
<dbReference type="CDD" id="cd00165">
    <property type="entry name" value="S4"/>
    <property type="match status" value="1"/>
</dbReference>
<dbReference type="FunFam" id="1.10.1050.10:FF:000001">
    <property type="entry name" value="30S ribosomal protein S4"/>
    <property type="match status" value="1"/>
</dbReference>
<dbReference type="FunFam" id="3.10.290.10:FF:000001">
    <property type="entry name" value="30S ribosomal protein S4"/>
    <property type="match status" value="1"/>
</dbReference>
<dbReference type="Gene3D" id="1.10.1050.10">
    <property type="entry name" value="Ribosomal Protein S4 Delta 41, Chain A, domain 1"/>
    <property type="match status" value="1"/>
</dbReference>
<dbReference type="Gene3D" id="3.10.290.10">
    <property type="entry name" value="RNA-binding S4 domain"/>
    <property type="match status" value="1"/>
</dbReference>
<dbReference type="HAMAP" id="MF_01306_B">
    <property type="entry name" value="Ribosomal_uS4_B"/>
    <property type="match status" value="1"/>
</dbReference>
<dbReference type="InterPro" id="IPR022801">
    <property type="entry name" value="Ribosomal_uS4"/>
</dbReference>
<dbReference type="InterPro" id="IPR005709">
    <property type="entry name" value="Ribosomal_uS4_bac-type"/>
</dbReference>
<dbReference type="InterPro" id="IPR001912">
    <property type="entry name" value="Ribosomal_uS4_N"/>
</dbReference>
<dbReference type="InterPro" id="IPR002942">
    <property type="entry name" value="S4_RNA-bd"/>
</dbReference>
<dbReference type="InterPro" id="IPR036986">
    <property type="entry name" value="S4_RNA-bd_sf"/>
</dbReference>
<dbReference type="NCBIfam" id="NF003717">
    <property type="entry name" value="PRK05327.1"/>
    <property type="match status" value="1"/>
</dbReference>
<dbReference type="NCBIfam" id="TIGR01017">
    <property type="entry name" value="rpsD_bact"/>
    <property type="match status" value="1"/>
</dbReference>
<dbReference type="PANTHER" id="PTHR11831">
    <property type="entry name" value="30S 40S RIBOSOMAL PROTEIN"/>
    <property type="match status" value="1"/>
</dbReference>
<dbReference type="PANTHER" id="PTHR11831:SF4">
    <property type="entry name" value="SMALL RIBOSOMAL SUBUNIT PROTEIN US4M"/>
    <property type="match status" value="1"/>
</dbReference>
<dbReference type="Pfam" id="PF00163">
    <property type="entry name" value="Ribosomal_S4"/>
    <property type="match status" value="1"/>
</dbReference>
<dbReference type="Pfam" id="PF01479">
    <property type="entry name" value="S4"/>
    <property type="match status" value="1"/>
</dbReference>
<dbReference type="SMART" id="SM01390">
    <property type="entry name" value="Ribosomal_S4"/>
    <property type="match status" value="1"/>
</dbReference>
<dbReference type="SMART" id="SM00363">
    <property type="entry name" value="S4"/>
    <property type="match status" value="1"/>
</dbReference>
<dbReference type="SUPFAM" id="SSF55174">
    <property type="entry name" value="Alpha-L RNA-binding motif"/>
    <property type="match status" value="1"/>
</dbReference>
<dbReference type="PROSITE" id="PS50889">
    <property type="entry name" value="S4"/>
    <property type="match status" value="1"/>
</dbReference>
<organism>
    <name type="scientific">Desulfatibacillum aliphaticivorans</name>
    <dbReference type="NCBI Taxonomy" id="218208"/>
    <lineage>
        <taxon>Bacteria</taxon>
        <taxon>Pseudomonadati</taxon>
        <taxon>Thermodesulfobacteriota</taxon>
        <taxon>Desulfobacteria</taxon>
        <taxon>Desulfobacterales</taxon>
        <taxon>Desulfatibacillaceae</taxon>
        <taxon>Desulfatibacillum</taxon>
    </lineage>
</organism>
<evidence type="ECO:0000255" key="1">
    <source>
        <dbReference type="HAMAP-Rule" id="MF_01306"/>
    </source>
</evidence>
<evidence type="ECO:0000305" key="2"/>